<gene>
    <name evidence="2" type="primary">CFAP97D2</name>
</gene>
<accession>A0A1B0GU71</accession>
<protein>
    <recommendedName>
        <fullName evidence="1">Uncharacterized protein CFAP97D2</fullName>
    </recommendedName>
    <alternativeName>
        <fullName evidence="2">CFAP97 domain-containing protein 2</fullName>
    </alternativeName>
</protein>
<reference key="1">
    <citation type="journal article" date="2004" name="Nature">
        <title>The DNA sequence and analysis of human chromosome 13.</title>
        <authorList>
            <person name="Dunham A."/>
            <person name="Matthews L.H."/>
            <person name="Burton J."/>
            <person name="Ashurst J.L."/>
            <person name="Howe K.L."/>
            <person name="Ashcroft K.J."/>
            <person name="Beare D.M."/>
            <person name="Burford D.C."/>
            <person name="Hunt S.E."/>
            <person name="Griffiths-Jones S."/>
            <person name="Jones M.C."/>
            <person name="Keenan S.J."/>
            <person name="Oliver K."/>
            <person name="Scott C.E."/>
            <person name="Ainscough R."/>
            <person name="Almeida J.P."/>
            <person name="Ambrose K.D."/>
            <person name="Andrews D.T."/>
            <person name="Ashwell R.I.S."/>
            <person name="Babbage A.K."/>
            <person name="Bagguley C.L."/>
            <person name="Bailey J."/>
            <person name="Bannerjee R."/>
            <person name="Barlow K.F."/>
            <person name="Bates K."/>
            <person name="Beasley H."/>
            <person name="Bird C.P."/>
            <person name="Bray-Allen S."/>
            <person name="Brown A.J."/>
            <person name="Brown J.Y."/>
            <person name="Burrill W."/>
            <person name="Carder C."/>
            <person name="Carter N.P."/>
            <person name="Chapman J.C."/>
            <person name="Clamp M.E."/>
            <person name="Clark S.Y."/>
            <person name="Clarke G."/>
            <person name="Clee C.M."/>
            <person name="Clegg S.C."/>
            <person name="Cobley V."/>
            <person name="Collins J.E."/>
            <person name="Corby N."/>
            <person name="Coville G.J."/>
            <person name="Deloukas P."/>
            <person name="Dhami P."/>
            <person name="Dunham I."/>
            <person name="Dunn M."/>
            <person name="Earthrowl M.E."/>
            <person name="Ellington A.G."/>
            <person name="Faulkner L."/>
            <person name="Frankish A.G."/>
            <person name="Frankland J."/>
            <person name="French L."/>
            <person name="Garner P."/>
            <person name="Garnett J."/>
            <person name="Gilbert J.G.R."/>
            <person name="Gilson C.J."/>
            <person name="Ghori J."/>
            <person name="Grafham D.V."/>
            <person name="Gribble S.M."/>
            <person name="Griffiths C."/>
            <person name="Hall R.E."/>
            <person name="Hammond S."/>
            <person name="Harley J.L."/>
            <person name="Hart E.A."/>
            <person name="Heath P.D."/>
            <person name="Howden P.J."/>
            <person name="Huckle E.J."/>
            <person name="Hunt P.J."/>
            <person name="Hunt A.R."/>
            <person name="Johnson C."/>
            <person name="Johnson D."/>
            <person name="Kay M."/>
            <person name="Kimberley A.M."/>
            <person name="King A."/>
            <person name="Laird G.K."/>
            <person name="Langford C.J."/>
            <person name="Lawlor S."/>
            <person name="Leongamornlert D.A."/>
            <person name="Lloyd D.M."/>
            <person name="Lloyd C."/>
            <person name="Loveland J.E."/>
            <person name="Lovell J."/>
            <person name="Martin S."/>
            <person name="Mashreghi-Mohammadi M."/>
            <person name="McLaren S.J."/>
            <person name="McMurray A."/>
            <person name="Milne S."/>
            <person name="Moore M.J.F."/>
            <person name="Nickerson T."/>
            <person name="Palmer S.A."/>
            <person name="Pearce A.V."/>
            <person name="Peck A.I."/>
            <person name="Pelan S."/>
            <person name="Phillimore B."/>
            <person name="Porter K.M."/>
            <person name="Rice C.M."/>
            <person name="Searle S."/>
            <person name="Sehra H.K."/>
            <person name="Shownkeen R."/>
            <person name="Skuce C.D."/>
            <person name="Smith M."/>
            <person name="Steward C.A."/>
            <person name="Sycamore N."/>
            <person name="Tester J."/>
            <person name="Thomas D.W."/>
            <person name="Tracey A."/>
            <person name="Tromans A."/>
            <person name="Tubby B."/>
            <person name="Wall M."/>
            <person name="Wallis J.M."/>
            <person name="West A.P."/>
            <person name="Whitehead S.L."/>
            <person name="Willey D.L."/>
            <person name="Wilming L."/>
            <person name="Wray P.W."/>
            <person name="Wright M.W."/>
            <person name="Young L."/>
            <person name="Coulson A."/>
            <person name="Durbin R.M."/>
            <person name="Hubbard T."/>
            <person name="Sulston J.E."/>
            <person name="Beck S."/>
            <person name="Bentley D.R."/>
            <person name="Rogers J."/>
            <person name="Ross M.T."/>
        </authorList>
    </citation>
    <scope>NUCLEOTIDE SEQUENCE [LARGE SCALE GENOMIC DNA]</scope>
</reference>
<dbReference type="EMBL" id="AL160396">
    <property type="status" value="NOT_ANNOTATED_CDS"/>
    <property type="molecule type" value="Genomic_DNA"/>
</dbReference>
<dbReference type="CCDS" id="CCDS91845.1"/>
<dbReference type="RefSeq" id="NP_001382158.1">
    <property type="nucleotide sequence ID" value="NM_001395229.1"/>
</dbReference>
<dbReference type="SMR" id="A0A1B0GU71"/>
<dbReference type="BioMuta" id="ENSG00000283361"/>
<dbReference type="jPOST" id="A0A1B0GU71"/>
<dbReference type="Ensembl" id="ENST00000636692.2">
    <property type="protein sequence ID" value="ENSP00000489989.1"/>
    <property type="gene ID" value="ENSG00000283361.3"/>
</dbReference>
<dbReference type="GeneID" id="101929355"/>
<dbReference type="MANE-Select" id="ENST00000636692.2">
    <property type="protein sequence ID" value="ENSP00000489989.1"/>
    <property type="RefSeq nucleotide sequence ID" value="NM_001395229.1"/>
    <property type="RefSeq protein sequence ID" value="NP_001382158.1"/>
</dbReference>
<dbReference type="AGR" id="HGNC:53789"/>
<dbReference type="GeneCards" id="CFAP97D2"/>
<dbReference type="HGNC" id="HGNC:53789">
    <property type="gene designation" value="CFAP97D2"/>
</dbReference>
<dbReference type="HPA" id="ENSG00000283361">
    <property type="expression patterns" value="Group enriched (choroid plexus, fallopian tube, pancreas)"/>
</dbReference>
<dbReference type="neXtProt" id="NX_A0A1B0GU71"/>
<dbReference type="VEuPathDB" id="HostDB:ENSG00000283361"/>
<dbReference type="GeneTree" id="ENSGT01000000214655"/>
<dbReference type="InParanoid" id="A0A1B0GU71"/>
<dbReference type="OrthoDB" id="2163395at2759"/>
<dbReference type="PAN-GO" id="A0A1B0GU71">
    <property type="GO annotations" value="0 GO annotations based on evolutionary models"/>
</dbReference>
<dbReference type="Pharos" id="A0A1B0GU71">
    <property type="development level" value="Tdark"/>
</dbReference>
<dbReference type="PRO" id="PR:A0A1B0GU71"/>
<dbReference type="Proteomes" id="UP000005640">
    <property type="component" value="Chromosome 13"/>
</dbReference>
<dbReference type="Bgee" id="ENSG00000283361">
    <property type="expression patterns" value="Expressed in right uterine tube and 62 other cell types or tissues"/>
</dbReference>
<dbReference type="ExpressionAtlas" id="A0A1B0GU71">
    <property type="expression patterns" value="baseline and differential"/>
</dbReference>
<dbReference type="InterPro" id="IPR038792">
    <property type="entry name" value="CFAP97D1/2"/>
</dbReference>
<dbReference type="InterPro" id="IPR029488">
    <property type="entry name" value="Hmw/CFAP97"/>
</dbReference>
<dbReference type="PANTHER" id="PTHR33768:SF7">
    <property type="entry name" value="CFAP97 DOMAIN CONTAINING 2"/>
    <property type="match status" value="1"/>
</dbReference>
<dbReference type="PANTHER" id="PTHR33768">
    <property type="entry name" value="MIP11318P"/>
    <property type="match status" value="1"/>
</dbReference>
<dbReference type="Pfam" id="PF13879">
    <property type="entry name" value="Hmw_CFAP97"/>
    <property type="match status" value="1"/>
</dbReference>
<sequence>MHGAPRLTFPCASEYLWHAREKAYQDHRRKVQSAQPLVDTRAPLTFRHLHLKLKRLKLEEERLSVIERDNRLLLEKVASVMRTRGQTDSKNNSKHRRK</sequence>
<feature type="chain" id="PRO_0000445036" description="Uncharacterized protein CFAP97D2">
    <location>
        <begin position="1"/>
        <end position="98"/>
    </location>
</feature>
<evidence type="ECO:0000305" key="1"/>
<evidence type="ECO:0000312" key="2">
    <source>
        <dbReference type="HGNC" id="HGNC:53789"/>
    </source>
</evidence>
<proteinExistence type="inferred from homology"/>
<organism>
    <name type="scientific">Homo sapiens</name>
    <name type="common">Human</name>
    <dbReference type="NCBI Taxonomy" id="9606"/>
    <lineage>
        <taxon>Eukaryota</taxon>
        <taxon>Metazoa</taxon>
        <taxon>Chordata</taxon>
        <taxon>Craniata</taxon>
        <taxon>Vertebrata</taxon>
        <taxon>Euteleostomi</taxon>
        <taxon>Mammalia</taxon>
        <taxon>Eutheria</taxon>
        <taxon>Euarchontoglires</taxon>
        <taxon>Primates</taxon>
        <taxon>Haplorrhini</taxon>
        <taxon>Catarrhini</taxon>
        <taxon>Hominidae</taxon>
        <taxon>Homo</taxon>
    </lineage>
</organism>
<name>C97D2_HUMAN</name>
<comment type="similarity">
    <text evidence="1">Belongs to the CFAP97 family.</text>
</comment>
<keyword id="KW-1185">Reference proteome</keyword>